<feature type="chain" id="PRO_1000066069" description="D-amino acid dehydrogenase">
    <location>
        <begin position="1"/>
        <end position="416"/>
    </location>
</feature>
<feature type="binding site" evidence="1">
    <location>
        <begin position="3"/>
        <end position="17"/>
    </location>
    <ligand>
        <name>FAD</name>
        <dbReference type="ChEBI" id="CHEBI:57692"/>
    </ligand>
</feature>
<dbReference type="EC" id="1.4.99.-" evidence="1"/>
<dbReference type="EMBL" id="AM040265">
    <property type="protein sequence ID" value="CAJ12477.1"/>
    <property type="molecule type" value="Genomic_DNA"/>
</dbReference>
<dbReference type="RefSeq" id="WP_002965723.1">
    <property type="nucleotide sequence ID" value="NZ_KN046823.1"/>
</dbReference>
<dbReference type="SMR" id="Q2YIL0"/>
<dbReference type="STRING" id="359391.BAB2_0311"/>
<dbReference type="KEGG" id="bmf:BAB2_0311"/>
<dbReference type="PATRIC" id="fig|359391.11.peg.2266"/>
<dbReference type="HOGENOM" id="CLU_007884_9_2_5"/>
<dbReference type="PhylomeDB" id="Q2YIL0"/>
<dbReference type="UniPathway" id="UPA00043">
    <property type="reaction ID" value="UER00498"/>
</dbReference>
<dbReference type="Proteomes" id="UP000002719">
    <property type="component" value="Chromosome II"/>
</dbReference>
<dbReference type="GO" id="GO:0005737">
    <property type="term" value="C:cytoplasm"/>
    <property type="evidence" value="ECO:0007669"/>
    <property type="project" value="TreeGrafter"/>
</dbReference>
<dbReference type="GO" id="GO:0005886">
    <property type="term" value="C:plasma membrane"/>
    <property type="evidence" value="ECO:0007669"/>
    <property type="project" value="TreeGrafter"/>
</dbReference>
<dbReference type="GO" id="GO:0008718">
    <property type="term" value="F:D-amino-acid dehydrogenase activity"/>
    <property type="evidence" value="ECO:0007669"/>
    <property type="project" value="UniProtKB-UniRule"/>
</dbReference>
<dbReference type="GO" id="GO:0055130">
    <property type="term" value="P:D-alanine catabolic process"/>
    <property type="evidence" value="ECO:0007669"/>
    <property type="project" value="UniProtKB-UniPathway"/>
</dbReference>
<dbReference type="FunFam" id="3.50.50.60:FF:000020">
    <property type="entry name" value="D-amino acid dehydrogenase"/>
    <property type="match status" value="1"/>
</dbReference>
<dbReference type="Gene3D" id="3.30.9.10">
    <property type="entry name" value="D-Amino Acid Oxidase, subunit A, domain 2"/>
    <property type="match status" value="1"/>
</dbReference>
<dbReference type="Gene3D" id="3.50.50.60">
    <property type="entry name" value="FAD/NAD(P)-binding domain"/>
    <property type="match status" value="2"/>
</dbReference>
<dbReference type="HAMAP" id="MF_01202">
    <property type="entry name" value="DadA"/>
    <property type="match status" value="1"/>
</dbReference>
<dbReference type="InterPro" id="IPR023080">
    <property type="entry name" value="DadA"/>
</dbReference>
<dbReference type="InterPro" id="IPR006076">
    <property type="entry name" value="FAD-dep_OxRdtase"/>
</dbReference>
<dbReference type="InterPro" id="IPR036188">
    <property type="entry name" value="FAD/NAD-bd_sf"/>
</dbReference>
<dbReference type="NCBIfam" id="NF001933">
    <property type="entry name" value="PRK00711.1"/>
    <property type="match status" value="1"/>
</dbReference>
<dbReference type="PANTHER" id="PTHR13847:SF280">
    <property type="entry name" value="D-AMINO ACID DEHYDROGENASE"/>
    <property type="match status" value="1"/>
</dbReference>
<dbReference type="PANTHER" id="PTHR13847">
    <property type="entry name" value="SARCOSINE DEHYDROGENASE-RELATED"/>
    <property type="match status" value="1"/>
</dbReference>
<dbReference type="Pfam" id="PF01266">
    <property type="entry name" value="DAO"/>
    <property type="match status" value="1"/>
</dbReference>
<dbReference type="SUPFAM" id="SSF54373">
    <property type="entry name" value="FAD-linked reductases, C-terminal domain"/>
    <property type="match status" value="1"/>
</dbReference>
<dbReference type="SUPFAM" id="SSF51905">
    <property type="entry name" value="FAD/NAD(P)-binding domain"/>
    <property type="match status" value="1"/>
</dbReference>
<organism>
    <name type="scientific">Brucella abortus (strain 2308)</name>
    <dbReference type="NCBI Taxonomy" id="359391"/>
    <lineage>
        <taxon>Bacteria</taxon>
        <taxon>Pseudomonadati</taxon>
        <taxon>Pseudomonadota</taxon>
        <taxon>Alphaproteobacteria</taxon>
        <taxon>Hyphomicrobiales</taxon>
        <taxon>Brucellaceae</taxon>
        <taxon>Brucella/Ochrobactrum group</taxon>
        <taxon>Brucella</taxon>
    </lineage>
</organism>
<proteinExistence type="inferred from homology"/>
<gene>
    <name evidence="1" type="primary">dadA</name>
    <name type="ordered locus">BAB2_0311</name>
</gene>
<comment type="function">
    <text evidence="1">Oxidative deamination of D-amino acids.</text>
</comment>
<comment type="catalytic activity">
    <reaction evidence="1">
        <text>a D-alpha-amino acid + A + H2O = a 2-oxocarboxylate + AH2 + NH4(+)</text>
        <dbReference type="Rhea" id="RHEA:18125"/>
        <dbReference type="ChEBI" id="CHEBI:13193"/>
        <dbReference type="ChEBI" id="CHEBI:15377"/>
        <dbReference type="ChEBI" id="CHEBI:17499"/>
        <dbReference type="ChEBI" id="CHEBI:28938"/>
        <dbReference type="ChEBI" id="CHEBI:35179"/>
        <dbReference type="ChEBI" id="CHEBI:59871"/>
    </reaction>
</comment>
<comment type="cofactor">
    <cofactor evidence="1">
        <name>FAD</name>
        <dbReference type="ChEBI" id="CHEBI:57692"/>
    </cofactor>
</comment>
<comment type="pathway">
    <text>Amino-acid degradation; D-alanine degradation; NH(3) and pyruvate from D-alanine: step 1/1.</text>
</comment>
<comment type="similarity">
    <text evidence="1">Belongs to the DadA oxidoreductase family.</text>
</comment>
<sequence>MQITILGSGVIGVTTAYYLAKLGHEVTVIDREEGPALETSFANAGQVSPGYASPWAAPGIPLKAAKWLFQKHAPLILRLTTDPVQYRWLLQMLANCTDSRYKINKTRMVRVAEYSRDCLIELRKDTGIEYDQRSQGTLQLFREQYQLDGIGKDIEVLRQDGVPFEVLDRDGCVNVEPALAHAKDKFVGGLRLPNDETGDCFKFTNALAKIAEGLGVKFRFGVNIKSLLMSGGKISGVETSEGIVTAERYVVALGSYTPALIKALGLNAPIYPVKGYSITAPIVDESRAPVSTVLDESYKIAITRLGDRIRVGGMAEVSGFTDDLPAARRATLDLSVTDLFPGGDLKAATFWSGLRPMTPDSTPIIGGTRYDNLFINAGHGTLGWTMACGSGRLLADLISGNKADIRADDLGIARYN</sequence>
<reference key="1">
    <citation type="journal article" date="2005" name="Infect. Immun.">
        <title>Whole-genome analyses of speciation events in pathogenic Brucellae.</title>
        <authorList>
            <person name="Chain P.S."/>
            <person name="Comerci D.J."/>
            <person name="Tolmasky M.E."/>
            <person name="Larimer F.W."/>
            <person name="Malfatti S.A."/>
            <person name="Vergez L.M."/>
            <person name="Aguero F."/>
            <person name="Land M.L."/>
            <person name="Ugalde R.A."/>
            <person name="Garcia E."/>
        </authorList>
    </citation>
    <scope>NUCLEOTIDE SEQUENCE [LARGE SCALE GENOMIC DNA]</scope>
    <source>
        <strain>2308</strain>
    </source>
</reference>
<protein>
    <recommendedName>
        <fullName evidence="1">D-amino acid dehydrogenase</fullName>
        <ecNumber evidence="1">1.4.99.-</ecNumber>
    </recommendedName>
</protein>
<name>DADA_BRUA2</name>
<keyword id="KW-0274">FAD</keyword>
<keyword id="KW-0285">Flavoprotein</keyword>
<keyword id="KW-0560">Oxidoreductase</keyword>
<keyword id="KW-1185">Reference proteome</keyword>
<accession>Q2YIL0</accession>
<evidence type="ECO:0000255" key="1">
    <source>
        <dbReference type="HAMAP-Rule" id="MF_01202"/>
    </source>
</evidence>